<protein>
    <recommendedName>
        <fullName evidence="6">E3 ubiquitin ligase Rnf121</fullName>
        <ecNumber evidence="1">2.3.2.27</ecNumber>
    </recommendedName>
    <alternativeName>
        <fullName>RING finger protein 121</fullName>
    </alternativeName>
</protein>
<reference key="1">
    <citation type="journal article" date="2005" name="Science">
        <title>The transcriptional landscape of the mammalian genome.</title>
        <authorList>
            <person name="Carninci P."/>
            <person name="Kasukawa T."/>
            <person name="Katayama S."/>
            <person name="Gough J."/>
            <person name="Frith M.C."/>
            <person name="Maeda N."/>
            <person name="Oyama R."/>
            <person name="Ravasi T."/>
            <person name="Lenhard B."/>
            <person name="Wells C."/>
            <person name="Kodzius R."/>
            <person name="Shimokawa K."/>
            <person name="Bajic V.B."/>
            <person name="Brenner S.E."/>
            <person name="Batalov S."/>
            <person name="Forrest A.R."/>
            <person name="Zavolan M."/>
            <person name="Davis M.J."/>
            <person name="Wilming L.G."/>
            <person name="Aidinis V."/>
            <person name="Allen J.E."/>
            <person name="Ambesi-Impiombato A."/>
            <person name="Apweiler R."/>
            <person name="Aturaliya R.N."/>
            <person name="Bailey T.L."/>
            <person name="Bansal M."/>
            <person name="Baxter L."/>
            <person name="Beisel K.W."/>
            <person name="Bersano T."/>
            <person name="Bono H."/>
            <person name="Chalk A.M."/>
            <person name="Chiu K.P."/>
            <person name="Choudhary V."/>
            <person name="Christoffels A."/>
            <person name="Clutterbuck D.R."/>
            <person name="Crowe M.L."/>
            <person name="Dalla E."/>
            <person name="Dalrymple B.P."/>
            <person name="de Bono B."/>
            <person name="Della Gatta G."/>
            <person name="di Bernardo D."/>
            <person name="Down T."/>
            <person name="Engstrom P."/>
            <person name="Fagiolini M."/>
            <person name="Faulkner G."/>
            <person name="Fletcher C.F."/>
            <person name="Fukushima T."/>
            <person name="Furuno M."/>
            <person name="Futaki S."/>
            <person name="Gariboldi M."/>
            <person name="Georgii-Hemming P."/>
            <person name="Gingeras T.R."/>
            <person name="Gojobori T."/>
            <person name="Green R.E."/>
            <person name="Gustincich S."/>
            <person name="Harbers M."/>
            <person name="Hayashi Y."/>
            <person name="Hensch T.K."/>
            <person name="Hirokawa N."/>
            <person name="Hill D."/>
            <person name="Huminiecki L."/>
            <person name="Iacono M."/>
            <person name="Ikeo K."/>
            <person name="Iwama A."/>
            <person name="Ishikawa T."/>
            <person name="Jakt M."/>
            <person name="Kanapin A."/>
            <person name="Katoh M."/>
            <person name="Kawasawa Y."/>
            <person name="Kelso J."/>
            <person name="Kitamura H."/>
            <person name="Kitano H."/>
            <person name="Kollias G."/>
            <person name="Krishnan S.P."/>
            <person name="Kruger A."/>
            <person name="Kummerfeld S.K."/>
            <person name="Kurochkin I.V."/>
            <person name="Lareau L.F."/>
            <person name="Lazarevic D."/>
            <person name="Lipovich L."/>
            <person name="Liu J."/>
            <person name="Liuni S."/>
            <person name="McWilliam S."/>
            <person name="Madan Babu M."/>
            <person name="Madera M."/>
            <person name="Marchionni L."/>
            <person name="Matsuda H."/>
            <person name="Matsuzawa S."/>
            <person name="Miki H."/>
            <person name="Mignone F."/>
            <person name="Miyake S."/>
            <person name="Morris K."/>
            <person name="Mottagui-Tabar S."/>
            <person name="Mulder N."/>
            <person name="Nakano N."/>
            <person name="Nakauchi H."/>
            <person name="Ng P."/>
            <person name="Nilsson R."/>
            <person name="Nishiguchi S."/>
            <person name="Nishikawa S."/>
            <person name="Nori F."/>
            <person name="Ohara O."/>
            <person name="Okazaki Y."/>
            <person name="Orlando V."/>
            <person name="Pang K.C."/>
            <person name="Pavan W.J."/>
            <person name="Pavesi G."/>
            <person name="Pesole G."/>
            <person name="Petrovsky N."/>
            <person name="Piazza S."/>
            <person name="Reed J."/>
            <person name="Reid J.F."/>
            <person name="Ring B.Z."/>
            <person name="Ringwald M."/>
            <person name="Rost B."/>
            <person name="Ruan Y."/>
            <person name="Salzberg S.L."/>
            <person name="Sandelin A."/>
            <person name="Schneider C."/>
            <person name="Schoenbach C."/>
            <person name="Sekiguchi K."/>
            <person name="Semple C.A."/>
            <person name="Seno S."/>
            <person name="Sessa L."/>
            <person name="Sheng Y."/>
            <person name="Shibata Y."/>
            <person name="Shimada H."/>
            <person name="Shimada K."/>
            <person name="Silva D."/>
            <person name="Sinclair B."/>
            <person name="Sperling S."/>
            <person name="Stupka E."/>
            <person name="Sugiura K."/>
            <person name="Sultana R."/>
            <person name="Takenaka Y."/>
            <person name="Taki K."/>
            <person name="Tammoja K."/>
            <person name="Tan S.L."/>
            <person name="Tang S."/>
            <person name="Taylor M.S."/>
            <person name="Tegner J."/>
            <person name="Teichmann S.A."/>
            <person name="Ueda H.R."/>
            <person name="van Nimwegen E."/>
            <person name="Verardo R."/>
            <person name="Wei C.L."/>
            <person name="Yagi K."/>
            <person name="Yamanishi H."/>
            <person name="Zabarovsky E."/>
            <person name="Zhu S."/>
            <person name="Zimmer A."/>
            <person name="Hide W."/>
            <person name="Bult C."/>
            <person name="Grimmond S.M."/>
            <person name="Teasdale R.D."/>
            <person name="Liu E.T."/>
            <person name="Brusic V."/>
            <person name="Quackenbush J."/>
            <person name="Wahlestedt C."/>
            <person name="Mattick J.S."/>
            <person name="Hume D.A."/>
            <person name="Kai C."/>
            <person name="Sasaki D."/>
            <person name="Tomaru Y."/>
            <person name="Fukuda S."/>
            <person name="Kanamori-Katayama M."/>
            <person name="Suzuki M."/>
            <person name="Aoki J."/>
            <person name="Arakawa T."/>
            <person name="Iida J."/>
            <person name="Imamura K."/>
            <person name="Itoh M."/>
            <person name="Kato T."/>
            <person name="Kawaji H."/>
            <person name="Kawagashira N."/>
            <person name="Kawashima T."/>
            <person name="Kojima M."/>
            <person name="Kondo S."/>
            <person name="Konno H."/>
            <person name="Nakano K."/>
            <person name="Ninomiya N."/>
            <person name="Nishio T."/>
            <person name="Okada M."/>
            <person name="Plessy C."/>
            <person name="Shibata K."/>
            <person name="Shiraki T."/>
            <person name="Suzuki S."/>
            <person name="Tagami M."/>
            <person name="Waki K."/>
            <person name="Watahiki A."/>
            <person name="Okamura-Oho Y."/>
            <person name="Suzuki H."/>
            <person name="Kawai J."/>
            <person name="Hayashizaki Y."/>
        </authorList>
    </citation>
    <scope>NUCLEOTIDE SEQUENCE [LARGE SCALE MRNA] (ISOFORMS 1; 2 AND 3)</scope>
    <source>
        <strain>C57BL/6J</strain>
        <tissue>Amnion</tissue>
        <tissue>Embryo</tissue>
        <tissue>Muellerian duct</tissue>
    </source>
</reference>
<reference key="2">
    <citation type="journal article" date="2004" name="Genome Res.">
        <title>The status, quality, and expansion of the NIH full-length cDNA project: the Mammalian Gene Collection (MGC).</title>
        <authorList>
            <consortium name="The MGC Project Team"/>
        </authorList>
    </citation>
    <scope>NUCLEOTIDE SEQUENCE [LARGE SCALE MRNA] (ISOFORM 1)</scope>
    <source>
        <strain>FVB/N</strain>
        <tissue>Kidney</tissue>
    </source>
</reference>
<reference key="3">
    <citation type="journal article" date="2010" name="Cell">
        <title>A tissue-specific atlas of mouse protein phosphorylation and expression.</title>
        <authorList>
            <person name="Huttlin E.L."/>
            <person name="Jedrychowski M.P."/>
            <person name="Elias J.E."/>
            <person name="Goswami T."/>
            <person name="Rad R."/>
            <person name="Beausoleil S.A."/>
            <person name="Villen J."/>
            <person name="Haas W."/>
            <person name="Sowa M.E."/>
            <person name="Gygi S.P."/>
        </authorList>
    </citation>
    <scope>IDENTIFICATION BY MASS SPECTROMETRY [LARGE SCALE ANALYSIS]</scope>
    <source>
        <tissue>Brain</tissue>
    </source>
</reference>
<organism>
    <name type="scientific">Mus musculus</name>
    <name type="common">Mouse</name>
    <dbReference type="NCBI Taxonomy" id="10090"/>
    <lineage>
        <taxon>Eukaryota</taxon>
        <taxon>Metazoa</taxon>
        <taxon>Chordata</taxon>
        <taxon>Craniata</taxon>
        <taxon>Vertebrata</taxon>
        <taxon>Euteleostomi</taxon>
        <taxon>Mammalia</taxon>
        <taxon>Eutheria</taxon>
        <taxon>Euarchontoglires</taxon>
        <taxon>Glires</taxon>
        <taxon>Rodentia</taxon>
        <taxon>Myomorpha</taxon>
        <taxon>Muroidea</taxon>
        <taxon>Muridae</taxon>
        <taxon>Murinae</taxon>
        <taxon>Mus</taxon>
        <taxon>Mus</taxon>
    </lineage>
</organism>
<accession>Q8R1Z9</accession>
<accession>Q3TXH5</accession>
<accession>Q8BP06</accession>
<accession>Q8BSB1</accession>
<accession>Q9D4X4</accession>
<sequence>MAAVVEVEVGGGALAERELDEVDMSDLSPEEQWRVEHARMHAKHRGHEAMHAEMVLILIATLVVAQLLLVQWKQRHPRSYNMVTLFQMWVVPLYFTVKLHWWRFLVIWIFFSAVTAFVTFRATRKPLVQTTPRLVYKWFLLIYKISYATGIVGYMAVMFTLFGLNLLFKIKPEDAMDFGISLLFYGLYYGVLERDFAEMCADYMASTIGFYSESGMPTKHLSDSVCAVCGQQIFVDVNEEGIIENTYRLSCNHVFHEFCIRGWCIVGKKQTCPYCKEKVDLKRMFSNPWERPHVMYGQLLDWLRYLVAWQPVIIGLVQGISYILGLE</sequence>
<gene>
    <name type="primary">Rnf121</name>
</gene>
<feature type="initiator methionine" description="Removed" evidence="2">
    <location>
        <position position="1"/>
    </location>
</feature>
<feature type="chain" id="PRO_0000261408" description="E3 ubiquitin ligase Rnf121">
    <location>
        <begin position="2"/>
        <end position="327"/>
    </location>
</feature>
<feature type="transmembrane region" description="Helical" evidence="3">
    <location>
        <begin position="50"/>
        <end position="70"/>
    </location>
</feature>
<feature type="transmembrane region" description="Helical" evidence="3">
    <location>
        <begin position="79"/>
        <end position="99"/>
    </location>
</feature>
<feature type="transmembrane region" description="Helical" evidence="3">
    <location>
        <begin position="100"/>
        <end position="120"/>
    </location>
</feature>
<feature type="transmembrane region" description="Helical" evidence="3">
    <location>
        <begin position="148"/>
        <end position="168"/>
    </location>
</feature>
<feature type="transmembrane region" description="Helical" evidence="3">
    <location>
        <begin position="172"/>
        <end position="192"/>
    </location>
</feature>
<feature type="transmembrane region" description="Helical" evidence="3">
    <location>
        <begin position="306"/>
        <end position="326"/>
    </location>
</feature>
<feature type="zinc finger region" description="RING-type; atypical" evidence="4">
    <location>
        <begin position="226"/>
        <end position="276"/>
    </location>
</feature>
<feature type="modified residue" description="N-acetylalanine" evidence="2">
    <location>
        <position position="2"/>
    </location>
</feature>
<feature type="splice variant" id="VSP_021683" description="In isoform 2." evidence="5">
    <original>AAVVEVEVGGGALAERELDE</original>
    <variation>FCQ</variation>
    <location>
        <begin position="2"/>
        <end position="21"/>
    </location>
</feature>
<feature type="splice variant" id="VSP_021684" description="In isoform 3." evidence="5">
    <original>AAVVEVEVGGGALAERELDE</original>
    <variation>RRVQADLQ</variation>
    <location>
        <begin position="2"/>
        <end position="21"/>
    </location>
</feature>
<feature type="sequence conflict" description="In Ref. 1; BAC37314." evidence="6" ref="1">
    <original>L</original>
    <variation>I</variation>
    <location>
        <position position="56"/>
    </location>
</feature>
<feature type="sequence conflict" description="In Ref. 1; BAB30089." evidence="6" ref="1">
    <original>A</original>
    <variation>G</variation>
    <location>
        <position position="65"/>
    </location>
</feature>
<feature type="sequence conflict" description="In Ref. 1; BAB30089." evidence="6" ref="1">
    <original>H</original>
    <variation>T</variation>
    <location>
        <position position="76"/>
    </location>
</feature>
<feature type="sequence conflict" description="In Ref. 1; BAB30089." evidence="6" ref="1">
    <original>K</original>
    <variation>N</variation>
    <location>
        <position position="144"/>
    </location>
</feature>
<feature type="sequence conflict" description="In Ref. 1; BAB30089." evidence="6" ref="1">
    <original>Y</original>
    <variation>C</variation>
    <location>
        <position position="185"/>
    </location>
</feature>
<feature type="sequence conflict" description="In Ref. 1; BAB30089." evidence="6" ref="1">
    <original>T</original>
    <variation>A</variation>
    <location>
        <position position="207"/>
    </location>
</feature>
<feature type="sequence conflict" description="In Ref. 1; BAE34941." evidence="6" ref="1">
    <original>P</original>
    <variation>H</variation>
    <location>
        <position position="217"/>
    </location>
</feature>
<comment type="function">
    <text evidence="1">E3 ubiquitin ligase which accepts ubiquitin and transfers it to substrates thereby promoting their degradation by the endoplasmic reticulum-associated degradation (ERAD) pathway which is a pathway involved in ubiquitin-dependent degradation of misfolded endoplasmic reticulum proteins (By similarity). May regulate the unfolded protein response to reduce endoplasmic reticulum stress (By similarity).</text>
</comment>
<comment type="catalytic activity">
    <reaction evidence="1">
        <text>S-ubiquitinyl-[E2 ubiquitin-conjugating enzyme]-L-cysteine + [acceptor protein]-L-lysine = [E2 ubiquitin-conjugating enzyme]-L-cysteine + N(6)-ubiquitinyl-[acceptor protein]-L-lysine.</text>
        <dbReference type="EC" id="2.3.2.27"/>
    </reaction>
</comment>
<comment type="pathway">
    <text evidence="1">Protein modification; protein ubiquitination.</text>
</comment>
<comment type="subcellular location">
    <subcellularLocation>
        <location evidence="1">Endoplasmic reticulum membrane</location>
        <topology evidence="6">Multi-pass membrane protein</topology>
    </subcellularLocation>
</comment>
<comment type="alternative products">
    <event type="alternative splicing"/>
    <isoform>
        <id>Q8R1Z9-1</id>
        <name>1</name>
        <sequence type="displayed"/>
    </isoform>
    <isoform>
        <id>Q8R1Z9-2</id>
        <name>2</name>
        <sequence type="described" ref="VSP_021683"/>
    </isoform>
    <isoform>
        <id>Q8R1Z9-3</id>
        <name>3</name>
        <sequence type="described" ref="VSP_021684"/>
    </isoform>
</comment>
<comment type="similarity">
    <text evidence="6">Belongs to the RNF121 family.</text>
</comment>
<comment type="sequence caution" evidence="6">
    <conflict type="erroneous initiation">
        <sequence resource="EMBL-CDS" id="BAC37314"/>
    </conflict>
</comment>
<name>RN121_MOUSE</name>
<dbReference type="EC" id="2.3.2.27" evidence="1"/>
<dbReference type="EMBL" id="AK016037">
    <property type="protein sequence ID" value="BAB30089.2"/>
    <property type="molecule type" value="mRNA"/>
</dbReference>
<dbReference type="EMBL" id="AK034806">
    <property type="protein sequence ID" value="BAC28837.1"/>
    <property type="molecule type" value="mRNA"/>
</dbReference>
<dbReference type="EMBL" id="AK078509">
    <property type="protein sequence ID" value="BAC37314.1"/>
    <property type="status" value="ALT_INIT"/>
    <property type="molecule type" value="mRNA"/>
</dbReference>
<dbReference type="EMBL" id="AK159260">
    <property type="protein sequence ID" value="BAE34941.1"/>
    <property type="molecule type" value="mRNA"/>
</dbReference>
<dbReference type="EMBL" id="AK169089">
    <property type="protein sequence ID" value="BAE40873.1"/>
    <property type="molecule type" value="mRNA"/>
</dbReference>
<dbReference type="EMBL" id="AK168821">
    <property type="protein sequence ID" value="BAE40648.1"/>
    <property type="molecule type" value="mRNA"/>
</dbReference>
<dbReference type="EMBL" id="BC022686">
    <property type="protein sequence ID" value="AAH22686.1"/>
    <property type="molecule type" value="mRNA"/>
</dbReference>
<dbReference type="CCDS" id="CCDS21523.1">
    <molecule id="Q8R1Z9-1"/>
</dbReference>
<dbReference type="RefSeq" id="NP_083487.2">
    <molecule id="Q8R1Z9-1"/>
    <property type="nucleotide sequence ID" value="NM_029211.3"/>
</dbReference>
<dbReference type="RefSeq" id="XP_006508338.1">
    <molecule id="Q8R1Z9-3"/>
    <property type="nucleotide sequence ID" value="XM_006508275.4"/>
</dbReference>
<dbReference type="BioGRID" id="217307">
    <property type="interactions" value="3"/>
</dbReference>
<dbReference type="FunCoup" id="Q8R1Z9">
    <property type="interactions" value="2072"/>
</dbReference>
<dbReference type="STRING" id="10090.ENSMUSP00000094396"/>
<dbReference type="iPTMnet" id="Q8R1Z9"/>
<dbReference type="PhosphoSitePlus" id="Q8R1Z9"/>
<dbReference type="PaxDb" id="10090-ENSMUSP00000094396"/>
<dbReference type="PeptideAtlas" id="Q8R1Z9"/>
<dbReference type="ProteomicsDB" id="300527">
    <molecule id="Q8R1Z9-1"/>
</dbReference>
<dbReference type="ProteomicsDB" id="300528">
    <molecule id="Q8R1Z9-2"/>
</dbReference>
<dbReference type="ProteomicsDB" id="300529">
    <molecule id="Q8R1Z9-3"/>
</dbReference>
<dbReference type="Pumba" id="Q8R1Z9"/>
<dbReference type="Antibodypedia" id="16872">
    <property type="antibodies" value="96 antibodies from 19 providers"/>
</dbReference>
<dbReference type="DNASU" id="75212"/>
<dbReference type="Ensembl" id="ENSMUST00000096639.12">
    <molecule id="Q8R1Z9-1"/>
    <property type="protein sequence ID" value="ENSMUSP00000094396.6"/>
    <property type="gene ID" value="ENSMUSG00000070426.13"/>
</dbReference>
<dbReference type="Ensembl" id="ENSMUST00000106953.8">
    <molecule id="Q8R1Z9-2"/>
    <property type="protein sequence ID" value="ENSMUSP00000102566.2"/>
    <property type="gene ID" value="ENSMUSG00000070426.13"/>
</dbReference>
<dbReference type="GeneID" id="75212"/>
<dbReference type="KEGG" id="mmu:75212"/>
<dbReference type="UCSC" id="uc009iqg.1">
    <molecule id="Q8R1Z9-1"/>
    <property type="organism name" value="mouse"/>
</dbReference>
<dbReference type="AGR" id="MGI:1922462"/>
<dbReference type="CTD" id="55298"/>
<dbReference type="MGI" id="MGI:1922462">
    <property type="gene designation" value="Rnf121"/>
</dbReference>
<dbReference type="VEuPathDB" id="HostDB:ENSMUSG00000070426"/>
<dbReference type="eggNOG" id="KOG1734">
    <property type="taxonomic scope" value="Eukaryota"/>
</dbReference>
<dbReference type="GeneTree" id="ENSGT00390000013075"/>
<dbReference type="InParanoid" id="Q8R1Z9"/>
<dbReference type="OMA" id="ICADKIA"/>
<dbReference type="OrthoDB" id="446635at2759"/>
<dbReference type="PhylomeDB" id="Q8R1Z9"/>
<dbReference type="TreeFam" id="TF314357"/>
<dbReference type="UniPathway" id="UPA00143"/>
<dbReference type="BioGRID-ORCS" id="75212">
    <property type="hits" value="7 hits in 79 CRISPR screens"/>
</dbReference>
<dbReference type="ChiTaRS" id="Rnf121">
    <property type="organism name" value="mouse"/>
</dbReference>
<dbReference type="PRO" id="PR:Q8R1Z9"/>
<dbReference type="Proteomes" id="UP000000589">
    <property type="component" value="Chromosome 7"/>
</dbReference>
<dbReference type="RNAct" id="Q8R1Z9">
    <property type="molecule type" value="protein"/>
</dbReference>
<dbReference type="Bgee" id="ENSMUSG00000070426">
    <property type="expression patterns" value="Expressed in embryonic brain and 239 other cell types or tissues"/>
</dbReference>
<dbReference type="ExpressionAtlas" id="Q8R1Z9">
    <property type="expression patterns" value="baseline and differential"/>
</dbReference>
<dbReference type="GO" id="GO:0005789">
    <property type="term" value="C:endoplasmic reticulum membrane"/>
    <property type="evidence" value="ECO:0007669"/>
    <property type="project" value="UniProtKB-SubCell"/>
</dbReference>
<dbReference type="GO" id="GO:0016740">
    <property type="term" value="F:transferase activity"/>
    <property type="evidence" value="ECO:0007669"/>
    <property type="project" value="UniProtKB-KW"/>
</dbReference>
<dbReference type="GO" id="GO:0008270">
    <property type="term" value="F:zinc ion binding"/>
    <property type="evidence" value="ECO:0007669"/>
    <property type="project" value="UniProtKB-KW"/>
</dbReference>
<dbReference type="GO" id="GO:0016567">
    <property type="term" value="P:protein ubiquitination"/>
    <property type="evidence" value="ECO:0007669"/>
    <property type="project" value="UniProtKB-UniPathway"/>
</dbReference>
<dbReference type="CDD" id="cd16475">
    <property type="entry name" value="RING-H2_RNF121-like"/>
    <property type="match status" value="1"/>
</dbReference>
<dbReference type="FunFam" id="3.30.40.10:FF:000074">
    <property type="entry name" value="Ring finger protein 121"/>
    <property type="match status" value="1"/>
</dbReference>
<dbReference type="Gene3D" id="3.30.40.10">
    <property type="entry name" value="Zinc/RING finger domain, C3HC4 (zinc finger)"/>
    <property type="match status" value="1"/>
</dbReference>
<dbReference type="InterPro" id="IPR040176">
    <property type="entry name" value="RNF121/RNF175"/>
</dbReference>
<dbReference type="InterPro" id="IPR001841">
    <property type="entry name" value="Znf_RING"/>
</dbReference>
<dbReference type="InterPro" id="IPR013083">
    <property type="entry name" value="Znf_RING/FYVE/PHD"/>
</dbReference>
<dbReference type="PANTHER" id="PTHR13407:SF1">
    <property type="entry name" value="E3 UBIQUITIN LIGASE RNF121"/>
    <property type="match status" value="1"/>
</dbReference>
<dbReference type="PANTHER" id="PTHR13407">
    <property type="entry name" value="RNF121 PROTEIN"/>
    <property type="match status" value="1"/>
</dbReference>
<dbReference type="SMART" id="SM00184">
    <property type="entry name" value="RING"/>
    <property type="match status" value="1"/>
</dbReference>
<dbReference type="SUPFAM" id="SSF57850">
    <property type="entry name" value="RING/U-box"/>
    <property type="match status" value="1"/>
</dbReference>
<dbReference type="PROSITE" id="PS50089">
    <property type="entry name" value="ZF_RING_2"/>
    <property type="match status" value="1"/>
</dbReference>
<evidence type="ECO:0000250" key="1">
    <source>
        <dbReference type="UniProtKB" id="Q09251"/>
    </source>
</evidence>
<evidence type="ECO:0000250" key="2">
    <source>
        <dbReference type="UniProtKB" id="Q9H920"/>
    </source>
</evidence>
<evidence type="ECO:0000255" key="3"/>
<evidence type="ECO:0000255" key="4">
    <source>
        <dbReference type="PROSITE-ProRule" id="PRU00175"/>
    </source>
</evidence>
<evidence type="ECO:0000303" key="5">
    <source>
    </source>
</evidence>
<evidence type="ECO:0000305" key="6"/>
<keyword id="KW-0007">Acetylation</keyword>
<keyword id="KW-0025">Alternative splicing</keyword>
<keyword id="KW-0256">Endoplasmic reticulum</keyword>
<keyword id="KW-0472">Membrane</keyword>
<keyword id="KW-0479">Metal-binding</keyword>
<keyword id="KW-1185">Reference proteome</keyword>
<keyword id="KW-0808">Transferase</keyword>
<keyword id="KW-0812">Transmembrane</keyword>
<keyword id="KW-1133">Transmembrane helix</keyword>
<keyword id="KW-0862">Zinc</keyword>
<keyword id="KW-0863">Zinc-finger</keyword>
<proteinExistence type="evidence at protein level"/>